<keyword id="KW-0002">3D-structure</keyword>
<keyword id="KW-0025">Alternative splicing</keyword>
<keyword id="KW-1003">Cell membrane</keyword>
<keyword id="KW-0472">Membrane</keyword>
<keyword id="KW-0597">Phosphoprotein</keyword>
<keyword id="KW-1267">Proteomics identification</keyword>
<keyword id="KW-1185">Reference proteome</keyword>
<keyword id="KW-0677">Repeat</keyword>
<keyword id="KW-0728">SH3 domain</keyword>
<keyword id="KW-0770">Synapse</keyword>
<gene>
    <name type="primary">RIMBP2</name>
    <name type="synonym">KIAA0318</name>
    <name type="synonym">RBP2</name>
</gene>
<organism>
    <name type="scientific">Homo sapiens</name>
    <name type="common">Human</name>
    <dbReference type="NCBI Taxonomy" id="9606"/>
    <lineage>
        <taxon>Eukaryota</taxon>
        <taxon>Metazoa</taxon>
        <taxon>Chordata</taxon>
        <taxon>Craniata</taxon>
        <taxon>Vertebrata</taxon>
        <taxon>Euteleostomi</taxon>
        <taxon>Mammalia</taxon>
        <taxon>Eutheria</taxon>
        <taxon>Euarchontoglires</taxon>
        <taxon>Primates</taxon>
        <taxon>Haplorrhini</taxon>
        <taxon>Catarrhini</taxon>
        <taxon>Hominidae</taxon>
        <taxon>Homo</taxon>
    </lineage>
</organism>
<accession>O15034</accession>
<accession>Q96ID2</accession>
<proteinExistence type="evidence at protein level"/>
<sequence>MREAAERRQQLQLEHDQALAVLSAKQQEIDLLQKSKVRELEEKCRTQSEQFNLLSRDLEKFRQHAGKIDLLGGSAVAPLDISTAPSKPFPQFMNGLATSLGKGQESAIGGSSAIGEYIRPLPQPGDRPEPLSAKPTFLSRSGSARCRSESDMENERNSNTSKQRYSGKVHLCVARYSYNPFDGPNENPEAELPLTAGKYLYVYGDMDEDGFYEGELLDGQRGLVPSNFVDFVQDNESRLASTLGNEQDQNFINHSGIGLEGEHILDLHSPTHIDAGITDNSAGTLDVNIDDIGEDIVPYPRKITLIKQLAKSVIVGWEPPAVPPGWGTVSSYNVLVDKETRMNLTLGSRTKALIEKLNMAACTYRISVQCVTSRGSSDELQCTLLVGKDVVVAPSHLRVDNITQISAQLSWLPTNSNYSHVIFLNEEEFDIVKAARYKYQFFNLRPNMAYKVKVLAKPHQMPWQLPLEQREKKEAFVEFSTLPAGPPAPPQDVTVQAGVTPATIRVSWRPPVLTPTGLSNGANVTGYGVYAKGQRVAEVIFPTADSTAVELVRLRSLEAKGVTVRTLSAQGESVDSAVAAVPPELLVPPTPHPRPAPQSKPLASSGVPETKDEHLGPHARMDEAWEQSRAPGPVHGHMLEPPVGPGRRSPSPSRILPQPQGTPVSTTVAKAMAREAAQRVAESSRLEKRSVFLERSSAGQYAASDEEDAYDSPDFKRRGASVDDFLKGSELGKQPHCCHGDEYHTESSRGSDLSDIMEEDEEELYSEMQLEDGGRRRPSGTSHNALKILGNPASAGRVDHMGRRFPRGSAGPQRSRPVTVPSIDDYGRDRLSPDFYEESETDPGAEELPARIFVALFDYDPLTMSPNPDAAEEELPFKEGQIIKVYGDKDADGFYRGETCARLGLIPCNMVSEIQADDEEMMDQLLRQGFLPLNTPVEKIERSRRSGRRHSVSTRRMVALYDYDPRESSPNVDVEAELTFCTGDIITVFGEIDEDGFYYGELNGQKGLVPSNFLEEVPDDVEVYLSDAPSHYSQDTPMRSKAKRKKSVHFTP</sequence>
<name>RIMB2_HUMAN</name>
<protein>
    <recommendedName>
        <fullName>RIMS-binding protein 2</fullName>
        <shortName>RIM-BP2</shortName>
    </recommendedName>
</protein>
<feature type="chain" id="PRO_0000221383" description="RIMS-binding protein 2">
    <location>
        <begin position="1"/>
        <end position="1052"/>
    </location>
</feature>
<feature type="domain" description="SH3 1" evidence="4">
    <location>
        <begin position="167"/>
        <end position="234"/>
    </location>
</feature>
<feature type="domain" description="Fibronectin type-III 1" evidence="5">
    <location>
        <begin position="297"/>
        <end position="390"/>
    </location>
</feature>
<feature type="domain" description="Fibronectin type-III 2" evidence="5">
    <location>
        <begin position="393"/>
        <end position="475"/>
    </location>
</feature>
<feature type="domain" description="Fibronectin type-III 3" evidence="5">
    <location>
        <begin position="489"/>
        <end position="590"/>
    </location>
</feature>
<feature type="domain" description="SH3 2" evidence="4">
    <location>
        <begin position="848"/>
        <end position="916"/>
    </location>
</feature>
<feature type="domain" description="SH3 3" evidence="4">
    <location>
        <begin position="952"/>
        <end position="1019"/>
    </location>
</feature>
<feature type="region of interest" description="Disordered" evidence="6">
    <location>
        <begin position="115"/>
        <end position="164"/>
    </location>
</feature>
<feature type="region of interest" description="Disordered" evidence="6">
    <location>
        <begin position="584"/>
        <end position="615"/>
    </location>
</feature>
<feature type="region of interest" description="Disordered" evidence="6">
    <location>
        <begin position="629"/>
        <end position="666"/>
    </location>
</feature>
<feature type="region of interest" description="Disordered" evidence="6">
    <location>
        <begin position="697"/>
        <end position="716"/>
    </location>
</feature>
<feature type="region of interest" description="Disordered" evidence="6">
    <location>
        <begin position="767"/>
        <end position="787"/>
    </location>
</feature>
<feature type="region of interest" description="Disordered" evidence="6">
    <location>
        <begin position="805"/>
        <end position="829"/>
    </location>
</feature>
<feature type="region of interest" description="Disordered" evidence="6">
    <location>
        <begin position="1029"/>
        <end position="1052"/>
    </location>
</feature>
<feature type="compositionally biased region" description="Basic and acidic residues" evidence="6">
    <location>
        <begin position="146"/>
        <end position="156"/>
    </location>
</feature>
<feature type="compositionally biased region" description="Pro residues" evidence="6">
    <location>
        <begin position="585"/>
        <end position="598"/>
    </location>
</feature>
<feature type="compositionally biased region" description="Low complexity" evidence="6">
    <location>
        <begin position="645"/>
        <end position="654"/>
    </location>
</feature>
<feature type="compositionally biased region" description="Basic residues" evidence="6">
    <location>
        <begin position="1040"/>
        <end position="1052"/>
    </location>
</feature>
<feature type="modified residue" description="Phosphoserine" evidence="3">
    <location>
        <position position="704"/>
    </location>
</feature>
<feature type="modified residue" description="Phosphoserine" evidence="3">
    <location>
        <position position="712"/>
    </location>
</feature>
<feature type="modified residue" description="Phosphoserine" evidence="2">
    <location>
        <position position="832"/>
    </location>
</feature>
<feature type="modified residue" description="Phosphoserine" evidence="2">
    <location>
        <position position="839"/>
    </location>
</feature>
<feature type="modified residue" description="Phosphothreonine" evidence="2">
    <location>
        <position position="841"/>
    </location>
</feature>
<feature type="splice variant" id="VSP_009213" description="In isoform 3." evidence="8">
    <location>
        <begin position="1"/>
        <end position="863"/>
    </location>
</feature>
<feature type="splice variant" id="VSP_009212" description="In isoform 2." evidence="7">
    <location>
        <begin position="1"/>
        <end position="92"/>
    </location>
</feature>
<feature type="splice variant" id="VSP_009214" description="In isoform 2." evidence="7">
    <original>PHC</original>
    <variation>MVS</variation>
    <location>
        <begin position="735"/>
        <end position="737"/>
    </location>
</feature>
<feature type="splice variant" id="VSP_009215" description="In isoform 2." evidence="7">
    <location>
        <begin position="738"/>
        <end position="1052"/>
    </location>
</feature>
<feature type="splice variant" id="VSP_009216" description="In isoform 3." evidence="8">
    <original>KKSVHFTP</original>
    <variation>VSKPI</variation>
    <location>
        <begin position="1045"/>
        <end position="1052"/>
    </location>
</feature>
<feature type="sequence variant" id="VAR_057714" description="In dbSNP:rs2292664.">
    <original>P</original>
    <variation>R</variation>
    <location>
        <position position="593"/>
    </location>
</feature>
<feature type="sequence variant" id="VAR_057715" description="In dbSNP:rs11060869.">
    <original>D</original>
    <variation>N</variation>
    <location>
        <position position="888"/>
    </location>
</feature>
<feature type="sequence conflict" description="In Ref. 1; BAA20776." evidence="9" ref="1">
    <original>T</original>
    <variation>I</variation>
    <location>
        <position position="1051"/>
    </location>
</feature>
<feature type="turn" evidence="10">
    <location>
        <begin position="164"/>
        <end position="166"/>
    </location>
</feature>
<feature type="strand" evidence="10">
    <location>
        <begin position="169"/>
        <end position="176"/>
    </location>
</feature>
<feature type="helix" evidence="10">
    <location>
        <begin position="180"/>
        <end position="182"/>
    </location>
</feature>
<feature type="turn" evidence="10">
    <location>
        <begin position="188"/>
        <end position="190"/>
    </location>
</feature>
<feature type="strand" evidence="10">
    <location>
        <begin position="199"/>
        <end position="205"/>
    </location>
</feature>
<feature type="strand" evidence="10">
    <location>
        <begin position="208"/>
        <end position="210"/>
    </location>
</feature>
<feature type="strand" evidence="10">
    <location>
        <begin position="213"/>
        <end position="216"/>
    </location>
</feature>
<feature type="strand" evidence="10">
    <location>
        <begin position="228"/>
        <end position="230"/>
    </location>
</feature>
<feature type="strand" evidence="12">
    <location>
        <begin position="491"/>
        <end position="495"/>
    </location>
</feature>
<feature type="strand" evidence="12">
    <location>
        <begin position="503"/>
        <end position="509"/>
    </location>
</feature>
<feature type="strand" evidence="12">
    <location>
        <begin position="519"/>
        <end position="522"/>
    </location>
</feature>
<feature type="strand" evidence="12">
    <location>
        <begin position="524"/>
        <end position="539"/>
    </location>
</feature>
<feature type="strand" evidence="12">
    <location>
        <begin position="545"/>
        <end position="551"/>
    </location>
</feature>
<feature type="helix" evidence="12">
    <location>
        <begin position="552"/>
        <end position="557"/>
    </location>
</feature>
<feature type="strand" evidence="12">
    <location>
        <begin position="562"/>
        <end position="570"/>
    </location>
</feature>
<feature type="helix" evidence="12">
    <location>
        <begin position="583"/>
        <end position="586"/>
    </location>
</feature>
<feature type="strand" evidence="13">
    <location>
        <begin position="851"/>
        <end position="854"/>
    </location>
</feature>
<feature type="turn" evidence="13">
    <location>
        <begin position="861"/>
        <end position="863"/>
    </location>
</feature>
<feature type="strand" evidence="13">
    <location>
        <begin position="864"/>
        <end position="866"/>
    </location>
</feature>
<feature type="helix" evidence="13">
    <location>
        <begin position="868"/>
        <end position="871"/>
    </location>
</feature>
<feature type="strand" evidence="13">
    <location>
        <begin position="882"/>
        <end position="889"/>
    </location>
</feature>
<feature type="strand" evidence="13">
    <location>
        <begin position="894"/>
        <end position="899"/>
    </location>
</feature>
<feature type="strand" evidence="13">
    <location>
        <begin position="902"/>
        <end position="907"/>
    </location>
</feature>
<feature type="turn" evidence="13">
    <location>
        <begin position="908"/>
        <end position="910"/>
    </location>
</feature>
<feature type="strand" evidence="13">
    <location>
        <begin position="911"/>
        <end position="913"/>
    </location>
</feature>
<feature type="strand" evidence="11">
    <location>
        <begin position="954"/>
        <end position="958"/>
    </location>
</feature>
<feature type="turn" evidence="11">
    <location>
        <begin position="965"/>
        <end position="967"/>
    </location>
</feature>
<feature type="strand" evidence="11">
    <location>
        <begin position="971"/>
        <end position="973"/>
    </location>
</feature>
<feature type="turn" evidence="11">
    <location>
        <begin position="974"/>
        <end position="976"/>
    </location>
</feature>
<feature type="strand" evidence="11">
    <location>
        <begin position="985"/>
        <end position="991"/>
    </location>
</feature>
<feature type="strand" evidence="11">
    <location>
        <begin position="994"/>
        <end position="1002"/>
    </location>
</feature>
<feature type="strand" evidence="11">
    <location>
        <begin position="1005"/>
        <end position="1010"/>
    </location>
</feature>
<feature type="helix" evidence="11">
    <location>
        <begin position="1011"/>
        <end position="1013"/>
    </location>
</feature>
<dbReference type="EMBL" id="AB002316">
    <property type="protein sequence ID" value="BAA20776.1"/>
    <property type="status" value="ALT_INIT"/>
    <property type="molecule type" value="mRNA"/>
</dbReference>
<dbReference type="EMBL" id="BX641152">
    <property type="protein sequence ID" value="CAE46066.1"/>
    <property type="molecule type" value="mRNA"/>
</dbReference>
<dbReference type="EMBL" id="AC063926">
    <property type="status" value="NOT_ANNOTATED_CDS"/>
    <property type="molecule type" value="Genomic_DNA"/>
</dbReference>
<dbReference type="EMBL" id="BC007632">
    <property type="protein sequence ID" value="AAH07632.1"/>
    <property type="molecule type" value="mRNA"/>
</dbReference>
<dbReference type="CCDS" id="CCDS31925.1">
    <molecule id="O15034-1"/>
</dbReference>
<dbReference type="RefSeq" id="NP_001338162.1">
    <molecule id="O15034-2"/>
    <property type="nucleotide sequence ID" value="NM_001351233.2"/>
</dbReference>
<dbReference type="RefSeq" id="NP_056162.4">
    <molecule id="O15034-1"/>
    <property type="nucleotide sequence ID" value="NM_015347.4"/>
</dbReference>
<dbReference type="PDB" id="1WIE">
    <property type="method" value="NMR"/>
    <property type="chains" value="A=160-242"/>
</dbReference>
<dbReference type="PDB" id="2CSI">
    <property type="method" value="NMR"/>
    <property type="chains" value="A=955-1017"/>
</dbReference>
<dbReference type="PDB" id="2CSP">
    <property type="method" value="NMR"/>
    <property type="chains" value="A=477-593"/>
</dbReference>
<dbReference type="PDB" id="2CSQ">
    <property type="method" value="NMR"/>
    <property type="chains" value="A=841-924"/>
</dbReference>
<dbReference type="PDBsum" id="1WIE"/>
<dbReference type="PDBsum" id="2CSI"/>
<dbReference type="PDBsum" id="2CSP"/>
<dbReference type="PDBsum" id="2CSQ"/>
<dbReference type="BMRB" id="O15034"/>
<dbReference type="SMR" id="O15034"/>
<dbReference type="BioGRID" id="117051">
    <property type="interactions" value="8"/>
</dbReference>
<dbReference type="FunCoup" id="O15034">
    <property type="interactions" value="232"/>
</dbReference>
<dbReference type="IntAct" id="O15034">
    <property type="interactions" value="6"/>
</dbReference>
<dbReference type="STRING" id="9606.ENSP00000261655"/>
<dbReference type="GlyCosmos" id="O15034">
    <property type="glycosylation" value="3 sites, 1 glycan"/>
</dbReference>
<dbReference type="GlyGen" id="O15034">
    <property type="glycosylation" value="4 sites, 1 O-linked glycan (3 sites)"/>
</dbReference>
<dbReference type="iPTMnet" id="O15034"/>
<dbReference type="PhosphoSitePlus" id="O15034"/>
<dbReference type="BioMuta" id="RIMBP2"/>
<dbReference type="jPOST" id="O15034"/>
<dbReference type="MassIVE" id="O15034"/>
<dbReference type="PaxDb" id="9606-ENSP00000261655"/>
<dbReference type="PeptideAtlas" id="O15034"/>
<dbReference type="ProteomicsDB" id="48391">
    <molecule id="O15034-1"/>
</dbReference>
<dbReference type="ProteomicsDB" id="48392">
    <molecule id="O15034-2"/>
</dbReference>
<dbReference type="ProteomicsDB" id="48393">
    <molecule id="O15034-3"/>
</dbReference>
<dbReference type="ABCD" id="O15034">
    <property type="antibodies" value="3 sequenced antibodies"/>
</dbReference>
<dbReference type="Antibodypedia" id="65349">
    <property type="antibodies" value="46 antibodies from 13 providers"/>
</dbReference>
<dbReference type="DNASU" id="23504"/>
<dbReference type="Ensembl" id="ENST00000261655.8">
    <molecule id="O15034-1"/>
    <property type="protein sequence ID" value="ENSP00000261655.4"/>
    <property type="gene ID" value="ENSG00000060709.17"/>
</dbReference>
<dbReference type="GeneID" id="23504"/>
<dbReference type="KEGG" id="hsa:23504"/>
<dbReference type="UCSC" id="uc001uil.3">
    <molecule id="O15034-1"/>
    <property type="organism name" value="human"/>
</dbReference>
<dbReference type="AGR" id="HGNC:30339"/>
<dbReference type="CTD" id="23504"/>
<dbReference type="DisGeNET" id="23504"/>
<dbReference type="GeneCards" id="RIMBP2"/>
<dbReference type="HGNC" id="HGNC:30339">
    <property type="gene designation" value="RIMBP2"/>
</dbReference>
<dbReference type="HPA" id="ENSG00000060709">
    <property type="expression patterns" value="Tissue enhanced (brain, parathyroid gland, pituitary gland)"/>
</dbReference>
<dbReference type="MIM" id="611602">
    <property type="type" value="gene"/>
</dbReference>
<dbReference type="neXtProt" id="NX_O15034"/>
<dbReference type="OpenTargets" id="ENSG00000060709"/>
<dbReference type="PharmGKB" id="PA143485594"/>
<dbReference type="VEuPathDB" id="HostDB:ENSG00000060709"/>
<dbReference type="eggNOG" id="KOG3632">
    <property type="taxonomic scope" value="Eukaryota"/>
</dbReference>
<dbReference type="GeneTree" id="ENSGT00950000183203"/>
<dbReference type="HOGENOM" id="CLU_001979_0_0_1"/>
<dbReference type="InParanoid" id="O15034"/>
<dbReference type="OrthoDB" id="4158657at2759"/>
<dbReference type="PAN-GO" id="O15034">
    <property type="GO annotations" value="1 GO annotation based on evolutionary models"/>
</dbReference>
<dbReference type="PhylomeDB" id="O15034"/>
<dbReference type="TreeFam" id="TF316230"/>
<dbReference type="PathwayCommons" id="O15034"/>
<dbReference type="SignaLink" id="O15034"/>
<dbReference type="SIGNOR" id="O15034"/>
<dbReference type="BioGRID-ORCS" id="23504">
    <property type="hits" value="12 hits in 1148 CRISPR screens"/>
</dbReference>
<dbReference type="CD-CODE" id="FB4E32DD">
    <property type="entry name" value="Presynaptic clusters and postsynaptic densities"/>
</dbReference>
<dbReference type="ChiTaRS" id="RIMBP2">
    <property type="organism name" value="human"/>
</dbReference>
<dbReference type="EvolutionaryTrace" id="O15034"/>
<dbReference type="GenomeRNAi" id="23504"/>
<dbReference type="Pharos" id="O15034">
    <property type="development level" value="Tdark"/>
</dbReference>
<dbReference type="PRO" id="PR:O15034"/>
<dbReference type="Proteomes" id="UP000005640">
    <property type="component" value="Chromosome 12"/>
</dbReference>
<dbReference type="RNAct" id="O15034">
    <property type="molecule type" value="protein"/>
</dbReference>
<dbReference type="Bgee" id="ENSG00000060709">
    <property type="expression patterns" value="Expressed in Brodmann (1909) area 10 and 146 other cell types or tissues"/>
</dbReference>
<dbReference type="ExpressionAtlas" id="O15034">
    <property type="expression patterns" value="baseline and differential"/>
</dbReference>
<dbReference type="GO" id="GO:0005886">
    <property type="term" value="C:plasma membrane"/>
    <property type="evidence" value="ECO:0007669"/>
    <property type="project" value="UniProtKB-SubCell"/>
</dbReference>
<dbReference type="GO" id="GO:0045202">
    <property type="term" value="C:synapse"/>
    <property type="evidence" value="ECO:0007669"/>
    <property type="project" value="UniProtKB-SubCell"/>
</dbReference>
<dbReference type="GO" id="GO:0007274">
    <property type="term" value="P:neuromuscular synaptic transmission"/>
    <property type="evidence" value="ECO:0000318"/>
    <property type="project" value="GO_Central"/>
</dbReference>
<dbReference type="CDD" id="cd00063">
    <property type="entry name" value="FN3"/>
    <property type="match status" value="3"/>
</dbReference>
<dbReference type="CDD" id="cd12014">
    <property type="entry name" value="SH3_RIM-BP_1"/>
    <property type="match status" value="1"/>
</dbReference>
<dbReference type="CDD" id="cd12012">
    <property type="entry name" value="SH3_RIM-BP_2"/>
    <property type="match status" value="1"/>
</dbReference>
<dbReference type="CDD" id="cd12013">
    <property type="entry name" value="SH3_RIM-BP_3"/>
    <property type="match status" value="1"/>
</dbReference>
<dbReference type="FunFam" id="2.30.30.40:FF:000023">
    <property type="entry name" value="RIMS-binding protein 2 isoform F"/>
    <property type="match status" value="1"/>
</dbReference>
<dbReference type="FunFam" id="2.30.30.40:FF:000006">
    <property type="entry name" value="RIMS-binding protein 2 isoform X1"/>
    <property type="match status" value="1"/>
</dbReference>
<dbReference type="FunFam" id="2.60.40.10:FF:000072">
    <property type="entry name" value="RIMS-binding protein 2 isoform X1"/>
    <property type="match status" value="1"/>
</dbReference>
<dbReference type="FunFam" id="2.60.40.10:FF:000643">
    <property type="entry name" value="RIMS-binding protein 2 isoform X1"/>
    <property type="match status" value="1"/>
</dbReference>
<dbReference type="FunFam" id="2.30.30.40:FF:000016">
    <property type="entry name" value="RIMS-binding protein 2 isoform X2"/>
    <property type="match status" value="1"/>
</dbReference>
<dbReference type="Gene3D" id="2.60.40.10">
    <property type="entry name" value="Immunoglobulins"/>
    <property type="match status" value="3"/>
</dbReference>
<dbReference type="Gene3D" id="2.30.30.40">
    <property type="entry name" value="SH3 Domains"/>
    <property type="match status" value="3"/>
</dbReference>
<dbReference type="InterPro" id="IPR003961">
    <property type="entry name" value="FN3_dom"/>
</dbReference>
<dbReference type="InterPro" id="IPR036116">
    <property type="entry name" value="FN3_sf"/>
</dbReference>
<dbReference type="InterPro" id="IPR013783">
    <property type="entry name" value="Ig-like_fold"/>
</dbReference>
<dbReference type="InterPro" id="IPR035753">
    <property type="entry name" value="RIM-BP_SH3_2"/>
</dbReference>
<dbReference type="InterPro" id="IPR035755">
    <property type="entry name" value="RIM-BP_SH3_3"/>
</dbReference>
<dbReference type="InterPro" id="IPR040325">
    <property type="entry name" value="RIMBP1/2/3"/>
</dbReference>
<dbReference type="InterPro" id="IPR036028">
    <property type="entry name" value="SH3-like_dom_sf"/>
</dbReference>
<dbReference type="InterPro" id="IPR001452">
    <property type="entry name" value="SH3_domain"/>
</dbReference>
<dbReference type="PANTHER" id="PTHR14234">
    <property type="entry name" value="RIM BINDING PROTEIN-RELATED"/>
    <property type="match status" value="1"/>
</dbReference>
<dbReference type="PANTHER" id="PTHR14234:SF18">
    <property type="entry name" value="RIMS-BINDING PROTEIN 2"/>
    <property type="match status" value="1"/>
</dbReference>
<dbReference type="Pfam" id="PF00041">
    <property type="entry name" value="fn3"/>
    <property type="match status" value="1"/>
</dbReference>
<dbReference type="Pfam" id="PF07653">
    <property type="entry name" value="SH3_2"/>
    <property type="match status" value="2"/>
</dbReference>
<dbReference type="Pfam" id="PF14604">
    <property type="entry name" value="SH3_9"/>
    <property type="match status" value="1"/>
</dbReference>
<dbReference type="PRINTS" id="PR00452">
    <property type="entry name" value="SH3DOMAIN"/>
</dbReference>
<dbReference type="SMART" id="SM00060">
    <property type="entry name" value="FN3"/>
    <property type="match status" value="3"/>
</dbReference>
<dbReference type="SMART" id="SM00326">
    <property type="entry name" value="SH3"/>
    <property type="match status" value="3"/>
</dbReference>
<dbReference type="SUPFAM" id="SSF49265">
    <property type="entry name" value="Fibronectin type III"/>
    <property type="match status" value="2"/>
</dbReference>
<dbReference type="SUPFAM" id="SSF50044">
    <property type="entry name" value="SH3-domain"/>
    <property type="match status" value="3"/>
</dbReference>
<dbReference type="PROSITE" id="PS50853">
    <property type="entry name" value="FN3"/>
    <property type="match status" value="3"/>
</dbReference>
<dbReference type="PROSITE" id="PS50002">
    <property type="entry name" value="SH3"/>
    <property type="match status" value="3"/>
</dbReference>
<comment type="function">
    <text evidence="1">Plays a role in the synaptic transmission as bifunctional linker that interacts simultaneously with RIMS1, RIMS2, CACNA1D and CACNA1B.</text>
</comment>
<comment type="subunit">
    <text evidence="1">Interacts with RIMS1, RIMS2, CACNA1D and CACNA1B, and potentially with other Ca(2+) channel alpha-1 isoforms.</text>
</comment>
<comment type="interaction">
    <interactant intactId="EBI-12906594">
        <id>O15034-2</id>
    </interactant>
    <interactant intactId="EBI-747693">
        <id>P41227</id>
        <label>NAA10</label>
    </interactant>
    <organismsDiffer>false</organismsDiffer>
    <experiments>3</experiments>
</comment>
<comment type="subcellular location">
    <subcellularLocation>
        <location evidence="1">Cell membrane</location>
    </subcellularLocation>
    <subcellularLocation>
        <location evidence="1">Synapse</location>
    </subcellularLocation>
    <text evidence="1">Synaptic plasma membrane.</text>
</comment>
<comment type="alternative products">
    <event type="alternative splicing"/>
    <isoform>
        <id>O15034-1</id>
        <name>1</name>
        <sequence type="displayed"/>
    </isoform>
    <isoform>
        <id>O15034-2</id>
        <name>2</name>
        <sequence type="described" ref="VSP_009212 VSP_009214 VSP_009215"/>
    </isoform>
    <isoform>
        <id>O15034-3</id>
        <name>3</name>
        <sequence type="described" ref="VSP_009213 VSP_009216"/>
    </isoform>
</comment>
<comment type="domain">
    <text evidence="1">The SH3 domains mediate binding to a proline-rich motif in RIMS1, RIMS2, CACNA1D and CACNA1B.</text>
</comment>
<comment type="similarity">
    <text evidence="9">Belongs to the RIMBP family.</text>
</comment>
<comment type="sequence caution" evidence="9">
    <conflict type="erroneous initiation">
        <sequence resource="EMBL-CDS" id="BAA20776"/>
    </conflict>
</comment>
<reference key="1">
    <citation type="journal article" date="1997" name="DNA Res.">
        <title>Prediction of the coding sequences of unidentified human genes. VII. The complete sequences of 100 new cDNA clones from brain which can code for large proteins in vitro.</title>
        <authorList>
            <person name="Nagase T."/>
            <person name="Ishikawa K."/>
            <person name="Nakajima D."/>
            <person name="Ohira M."/>
            <person name="Seki N."/>
            <person name="Miyajima N."/>
            <person name="Tanaka A."/>
            <person name="Kotani H."/>
            <person name="Nomura N."/>
            <person name="Ohara O."/>
        </authorList>
    </citation>
    <scope>NUCLEOTIDE SEQUENCE [LARGE SCALE MRNA] (ISOFORM 1)</scope>
    <source>
        <tissue>Brain</tissue>
    </source>
</reference>
<reference key="2">
    <citation type="journal article" date="2007" name="BMC Genomics">
        <title>The full-ORF clone resource of the German cDNA consortium.</title>
        <authorList>
            <person name="Bechtel S."/>
            <person name="Rosenfelder H."/>
            <person name="Duda A."/>
            <person name="Schmidt C.P."/>
            <person name="Ernst U."/>
            <person name="Wellenreuther R."/>
            <person name="Mehrle A."/>
            <person name="Schuster C."/>
            <person name="Bahr A."/>
            <person name="Bloecker H."/>
            <person name="Heubner D."/>
            <person name="Hoerlein A."/>
            <person name="Michel G."/>
            <person name="Wedler H."/>
            <person name="Koehrer K."/>
            <person name="Ottenwaelder B."/>
            <person name="Poustka A."/>
            <person name="Wiemann S."/>
            <person name="Schupp I."/>
        </authorList>
    </citation>
    <scope>NUCLEOTIDE SEQUENCE [LARGE SCALE MRNA] (ISOFORM 3)</scope>
    <source>
        <tissue>Fetal kidney</tissue>
    </source>
</reference>
<reference key="3">
    <citation type="journal article" date="2006" name="Nature">
        <title>The finished DNA sequence of human chromosome 12.</title>
        <authorList>
            <person name="Scherer S.E."/>
            <person name="Muzny D.M."/>
            <person name="Buhay C.J."/>
            <person name="Chen R."/>
            <person name="Cree A."/>
            <person name="Ding Y."/>
            <person name="Dugan-Rocha S."/>
            <person name="Gill R."/>
            <person name="Gunaratne P."/>
            <person name="Harris R.A."/>
            <person name="Hawes A.C."/>
            <person name="Hernandez J."/>
            <person name="Hodgson A.V."/>
            <person name="Hume J."/>
            <person name="Jackson A."/>
            <person name="Khan Z.M."/>
            <person name="Kovar-Smith C."/>
            <person name="Lewis L.R."/>
            <person name="Lozado R.J."/>
            <person name="Metzker M.L."/>
            <person name="Milosavljevic A."/>
            <person name="Miner G.R."/>
            <person name="Montgomery K.T."/>
            <person name="Morgan M.B."/>
            <person name="Nazareth L.V."/>
            <person name="Scott G."/>
            <person name="Sodergren E."/>
            <person name="Song X.-Z."/>
            <person name="Steffen D."/>
            <person name="Lovering R.C."/>
            <person name="Wheeler D.A."/>
            <person name="Worley K.C."/>
            <person name="Yuan Y."/>
            <person name="Zhang Z."/>
            <person name="Adams C.Q."/>
            <person name="Ansari-Lari M.A."/>
            <person name="Ayele M."/>
            <person name="Brown M.J."/>
            <person name="Chen G."/>
            <person name="Chen Z."/>
            <person name="Clerc-Blankenburg K.P."/>
            <person name="Davis C."/>
            <person name="Delgado O."/>
            <person name="Dinh H.H."/>
            <person name="Draper H."/>
            <person name="Gonzalez-Garay M.L."/>
            <person name="Havlak P."/>
            <person name="Jackson L.R."/>
            <person name="Jacob L.S."/>
            <person name="Kelly S.H."/>
            <person name="Li L."/>
            <person name="Li Z."/>
            <person name="Liu J."/>
            <person name="Liu W."/>
            <person name="Lu J."/>
            <person name="Maheshwari M."/>
            <person name="Nguyen B.-V."/>
            <person name="Okwuonu G.O."/>
            <person name="Pasternak S."/>
            <person name="Perez L.M."/>
            <person name="Plopper F.J.H."/>
            <person name="Santibanez J."/>
            <person name="Shen H."/>
            <person name="Tabor P.E."/>
            <person name="Verduzco D."/>
            <person name="Waldron L."/>
            <person name="Wang Q."/>
            <person name="Williams G.A."/>
            <person name="Zhang J."/>
            <person name="Zhou J."/>
            <person name="Allen C.C."/>
            <person name="Amin A.G."/>
            <person name="Anyalebechi V."/>
            <person name="Bailey M."/>
            <person name="Barbaria J.A."/>
            <person name="Bimage K.E."/>
            <person name="Bryant N.P."/>
            <person name="Burch P.E."/>
            <person name="Burkett C.E."/>
            <person name="Burrell K.L."/>
            <person name="Calderon E."/>
            <person name="Cardenas V."/>
            <person name="Carter K."/>
            <person name="Casias K."/>
            <person name="Cavazos I."/>
            <person name="Cavazos S.R."/>
            <person name="Ceasar H."/>
            <person name="Chacko J."/>
            <person name="Chan S.N."/>
            <person name="Chavez D."/>
            <person name="Christopoulos C."/>
            <person name="Chu J."/>
            <person name="Cockrell R."/>
            <person name="Cox C.D."/>
            <person name="Dang M."/>
            <person name="Dathorne S.R."/>
            <person name="David R."/>
            <person name="Davis C.M."/>
            <person name="Davy-Carroll L."/>
            <person name="Deshazo D.R."/>
            <person name="Donlin J.E."/>
            <person name="D'Souza L."/>
            <person name="Eaves K.A."/>
            <person name="Egan A."/>
            <person name="Emery-Cohen A.J."/>
            <person name="Escotto M."/>
            <person name="Flagg N."/>
            <person name="Forbes L.D."/>
            <person name="Gabisi A.M."/>
            <person name="Garza M."/>
            <person name="Hamilton C."/>
            <person name="Henderson N."/>
            <person name="Hernandez O."/>
            <person name="Hines S."/>
            <person name="Hogues M.E."/>
            <person name="Huang M."/>
            <person name="Idlebird D.G."/>
            <person name="Johnson R."/>
            <person name="Jolivet A."/>
            <person name="Jones S."/>
            <person name="Kagan R."/>
            <person name="King L.M."/>
            <person name="Leal B."/>
            <person name="Lebow H."/>
            <person name="Lee S."/>
            <person name="LeVan J.M."/>
            <person name="Lewis L.C."/>
            <person name="London P."/>
            <person name="Lorensuhewa L.M."/>
            <person name="Loulseged H."/>
            <person name="Lovett D.A."/>
            <person name="Lucier A."/>
            <person name="Lucier R.L."/>
            <person name="Ma J."/>
            <person name="Madu R.C."/>
            <person name="Mapua P."/>
            <person name="Martindale A.D."/>
            <person name="Martinez E."/>
            <person name="Massey E."/>
            <person name="Mawhiney S."/>
            <person name="Meador M.G."/>
            <person name="Mendez S."/>
            <person name="Mercado C."/>
            <person name="Mercado I.C."/>
            <person name="Merritt C.E."/>
            <person name="Miner Z.L."/>
            <person name="Minja E."/>
            <person name="Mitchell T."/>
            <person name="Mohabbat F."/>
            <person name="Mohabbat K."/>
            <person name="Montgomery B."/>
            <person name="Moore N."/>
            <person name="Morris S."/>
            <person name="Munidasa M."/>
            <person name="Ngo R.N."/>
            <person name="Nguyen N.B."/>
            <person name="Nickerson E."/>
            <person name="Nwaokelemeh O.O."/>
            <person name="Nwokenkwo S."/>
            <person name="Obregon M."/>
            <person name="Oguh M."/>
            <person name="Oragunye N."/>
            <person name="Oviedo R.J."/>
            <person name="Parish B.J."/>
            <person name="Parker D.N."/>
            <person name="Parrish J."/>
            <person name="Parks K.L."/>
            <person name="Paul H.A."/>
            <person name="Payton B.A."/>
            <person name="Perez A."/>
            <person name="Perrin W."/>
            <person name="Pickens A."/>
            <person name="Primus E.L."/>
            <person name="Pu L.-L."/>
            <person name="Puazo M."/>
            <person name="Quiles M.M."/>
            <person name="Quiroz J.B."/>
            <person name="Rabata D."/>
            <person name="Reeves K."/>
            <person name="Ruiz S.J."/>
            <person name="Shao H."/>
            <person name="Sisson I."/>
            <person name="Sonaike T."/>
            <person name="Sorelle R.P."/>
            <person name="Sutton A.E."/>
            <person name="Svatek A.F."/>
            <person name="Svetz L.A."/>
            <person name="Tamerisa K.S."/>
            <person name="Taylor T.R."/>
            <person name="Teague B."/>
            <person name="Thomas N."/>
            <person name="Thorn R.D."/>
            <person name="Trejos Z.Y."/>
            <person name="Trevino B.K."/>
            <person name="Ukegbu O.N."/>
            <person name="Urban J.B."/>
            <person name="Vasquez L.I."/>
            <person name="Vera V.A."/>
            <person name="Villasana D.M."/>
            <person name="Wang L."/>
            <person name="Ward-Moore S."/>
            <person name="Warren J.T."/>
            <person name="Wei X."/>
            <person name="White F."/>
            <person name="Williamson A.L."/>
            <person name="Wleczyk R."/>
            <person name="Wooden H.S."/>
            <person name="Wooden S.H."/>
            <person name="Yen J."/>
            <person name="Yoon L."/>
            <person name="Yoon V."/>
            <person name="Zorrilla S.E."/>
            <person name="Nelson D."/>
            <person name="Kucherlapati R."/>
            <person name="Weinstock G."/>
            <person name="Gibbs R.A."/>
        </authorList>
    </citation>
    <scope>NUCLEOTIDE SEQUENCE [LARGE SCALE GENOMIC DNA]</scope>
</reference>
<reference key="4">
    <citation type="journal article" date="2004" name="Genome Res.">
        <title>The status, quality, and expansion of the NIH full-length cDNA project: the Mammalian Gene Collection (MGC).</title>
        <authorList>
            <consortium name="The MGC Project Team"/>
        </authorList>
    </citation>
    <scope>NUCLEOTIDE SEQUENCE [LARGE SCALE MRNA] (ISOFORM 2)</scope>
    <source>
        <tissue>Brain</tissue>
    </source>
</reference>
<reference key="5">
    <citation type="submission" date="2005-11" db="PDB data bank">
        <title>Solution structure of the SH3 domains and FNIII domain of KIAA0318 protein.</title>
        <authorList>
            <consortium name="RIKEN structural genomics initiative (RSGI)"/>
        </authorList>
    </citation>
    <scope>STRUCTURE BY NMR OF 158-244; 477-593 AND 839-1017</scope>
</reference>
<evidence type="ECO:0000250" key="1"/>
<evidence type="ECO:0000250" key="2">
    <source>
        <dbReference type="UniProtKB" id="Q80U40"/>
    </source>
</evidence>
<evidence type="ECO:0000250" key="3">
    <source>
        <dbReference type="UniProtKB" id="Q9JIR1"/>
    </source>
</evidence>
<evidence type="ECO:0000255" key="4">
    <source>
        <dbReference type="PROSITE-ProRule" id="PRU00192"/>
    </source>
</evidence>
<evidence type="ECO:0000255" key="5">
    <source>
        <dbReference type="PROSITE-ProRule" id="PRU00316"/>
    </source>
</evidence>
<evidence type="ECO:0000256" key="6">
    <source>
        <dbReference type="SAM" id="MobiDB-lite"/>
    </source>
</evidence>
<evidence type="ECO:0000303" key="7">
    <source>
    </source>
</evidence>
<evidence type="ECO:0000303" key="8">
    <source>
    </source>
</evidence>
<evidence type="ECO:0000305" key="9"/>
<evidence type="ECO:0007829" key="10">
    <source>
        <dbReference type="PDB" id="1WIE"/>
    </source>
</evidence>
<evidence type="ECO:0007829" key="11">
    <source>
        <dbReference type="PDB" id="2CSI"/>
    </source>
</evidence>
<evidence type="ECO:0007829" key="12">
    <source>
        <dbReference type="PDB" id="2CSP"/>
    </source>
</evidence>
<evidence type="ECO:0007829" key="13">
    <source>
        <dbReference type="PDB" id="2CSQ"/>
    </source>
</evidence>